<evidence type="ECO:0000255" key="1">
    <source>
        <dbReference type="HAMAP-Rule" id="MF_00083"/>
    </source>
</evidence>
<accession>B2UER4</accession>
<dbReference type="EC" id="3.1.1.29" evidence="1"/>
<dbReference type="EMBL" id="CP001068">
    <property type="protein sequence ID" value="ACD25410.1"/>
    <property type="molecule type" value="Genomic_DNA"/>
</dbReference>
<dbReference type="SMR" id="B2UER4"/>
<dbReference type="STRING" id="402626.Rpic_0248"/>
<dbReference type="KEGG" id="rpi:Rpic_0248"/>
<dbReference type="eggNOG" id="COG0193">
    <property type="taxonomic scope" value="Bacteria"/>
</dbReference>
<dbReference type="HOGENOM" id="CLU_062456_3_1_4"/>
<dbReference type="GO" id="GO:0005737">
    <property type="term" value="C:cytoplasm"/>
    <property type="evidence" value="ECO:0007669"/>
    <property type="project" value="UniProtKB-SubCell"/>
</dbReference>
<dbReference type="GO" id="GO:0004045">
    <property type="term" value="F:peptidyl-tRNA hydrolase activity"/>
    <property type="evidence" value="ECO:0007669"/>
    <property type="project" value="UniProtKB-UniRule"/>
</dbReference>
<dbReference type="GO" id="GO:0000049">
    <property type="term" value="F:tRNA binding"/>
    <property type="evidence" value="ECO:0007669"/>
    <property type="project" value="UniProtKB-UniRule"/>
</dbReference>
<dbReference type="GO" id="GO:0006515">
    <property type="term" value="P:protein quality control for misfolded or incompletely synthesized proteins"/>
    <property type="evidence" value="ECO:0007669"/>
    <property type="project" value="UniProtKB-UniRule"/>
</dbReference>
<dbReference type="GO" id="GO:0072344">
    <property type="term" value="P:rescue of stalled ribosome"/>
    <property type="evidence" value="ECO:0007669"/>
    <property type="project" value="UniProtKB-UniRule"/>
</dbReference>
<dbReference type="CDD" id="cd00462">
    <property type="entry name" value="PTH"/>
    <property type="match status" value="1"/>
</dbReference>
<dbReference type="FunFam" id="3.40.50.1470:FF:000001">
    <property type="entry name" value="Peptidyl-tRNA hydrolase"/>
    <property type="match status" value="1"/>
</dbReference>
<dbReference type="Gene3D" id="3.40.50.1470">
    <property type="entry name" value="Peptidyl-tRNA hydrolase"/>
    <property type="match status" value="1"/>
</dbReference>
<dbReference type="HAMAP" id="MF_00083">
    <property type="entry name" value="Pept_tRNA_hydro_bact"/>
    <property type="match status" value="1"/>
</dbReference>
<dbReference type="InterPro" id="IPR001328">
    <property type="entry name" value="Pept_tRNA_hydro"/>
</dbReference>
<dbReference type="InterPro" id="IPR018171">
    <property type="entry name" value="Pept_tRNA_hydro_CS"/>
</dbReference>
<dbReference type="InterPro" id="IPR036416">
    <property type="entry name" value="Pept_tRNA_hydro_sf"/>
</dbReference>
<dbReference type="NCBIfam" id="TIGR00447">
    <property type="entry name" value="pth"/>
    <property type="match status" value="1"/>
</dbReference>
<dbReference type="PANTHER" id="PTHR17224">
    <property type="entry name" value="PEPTIDYL-TRNA HYDROLASE"/>
    <property type="match status" value="1"/>
</dbReference>
<dbReference type="PANTHER" id="PTHR17224:SF1">
    <property type="entry name" value="PEPTIDYL-TRNA HYDROLASE"/>
    <property type="match status" value="1"/>
</dbReference>
<dbReference type="Pfam" id="PF01195">
    <property type="entry name" value="Pept_tRNA_hydro"/>
    <property type="match status" value="1"/>
</dbReference>
<dbReference type="SUPFAM" id="SSF53178">
    <property type="entry name" value="Peptidyl-tRNA hydrolase-like"/>
    <property type="match status" value="1"/>
</dbReference>
<dbReference type="PROSITE" id="PS01195">
    <property type="entry name" value="PEPT_TRNA_HYDROL_1"/>
    <property type="match status" value="1"/>
</dbReference>
<dbReference type="PROSITE" id="PS01196">
    <property type="entry name" value="PEPT_TRNA_HYDROL_2"/>
    <property type="match status" value="1"/>
</dbReference>
<name>PTH_RALPJ</name>
<sequence length="200" mass="21963">MIKLIVGLGNPGAEYAATRHNAGFWLVDQLARMGNVTLRNETRFHGYAARANLWGNEVWLLQPQTFMNRSGLATVALARFYKVMPDEILVVHDELDLPPGTVKLKLGGGSGGHNGLKDIAAHLTTQQFWRLRLGIGHPRNLLPPGTAASGQHDVANFVLKAPRKEEQDLIDRAIDQSLDALPELIAGNAEKAMMRLHTAH</sequence>
<proteinExistence type="inferred from homology"/>
<feature type="chain" id="PRO_1000092973" description="Peptidyl-tRNA hydrolase">
    <location>
        <begin position="1"/>
        <end position="200"/>
    </location>
</feature>
<feature type="active site" description="Proton acceptor" evidence="1">
    <location>
        <position position="20"/>
    </location>
</feature>
<feature type="binding site" evidence="1">
    <location>
        <position position="15"/>
    </location>
    <ligand>
        <name>tRNA</name>
        <dbReference type="ChEBI" id="CHEBI:17843"/>
    </ligand>
</feature>
<feature type="binding site" evidence="1">
    <location>
        <position position="66"/>
    </location>
    <ligand>
        <name>tRNA</name>
        <dbReference type="ChEBI" id="CHEBI:17843"/>
    </ligand>
</feature>
<feature type="binding site" evidence="1">
    <location>
        <position position="68"/>
    </location>
    <ligand>
        <name>tRNA</name>
        <dbReference type="ChEBI" id="CHEBI:17843"/>
    </ligand>
</feature>
<feature type="binding site" evidence="1">
    <location>
        <position position="114"/>
    </location>
    <ligand>
        <name>tRNA</name>
        <dbReference type="ChEBI" id="CHEBI:17843"/>
    </ligand>
</feature>
<feature type="site" description="Discriminates between blocked and unblocked aminoacyl-tRNA" evidence="1">
    <location>
        <position position="10"/>
    </location>
</feature>
<feature type="site" description="Stabilizes the basic form of H active site to accept a proton" evidence="1">
    <location>
        <position position="93"/>
    </location>
</feature>
<reference key="1">
    <citation type="submission" date="2008-05" db="EMBL/GenBank/DDBJ databases">
        <title>Complete sequence of chromosome 1 of Ralstonia pickettii 12J.</title>
        <authorList>
            <person name="Lucas S."/>
            <person name="Copeland A."/>
            <person name="Lapidus A."/>
            <person name="Glavina del Rio T."/>
            <person name="Dalin E."/>
            <person name="Tice H."/>
            <person name="Bruce D."/>
            <person name="Goodwin L."/>
            <person name="Pitluck S."/>
            <person name="Meincke L."/>
            <person name="Brettin T."/>
            <person name="Detter J.C."/>
            <person name="Han C."/>
            <person name="Kuske C.R."/>
            <person name="Schmutz J."/>
            <person name="Larimer F."/>
            <person name="Land M."/>
            <person name="Hauser L."/>
            <person name="Kyrpides N."/>
            <person name="Mikhailova N."/>
            <person name="Marsh T."/>
            <person name="Richardson P."/>
        </authorList>
    </citation>
    <scope>NUCLEOTIDE SEQUENCE [LARGE SCALE GENOMIC DNA]</scope>
    <source>
        <strain>12J</strain>
    </source>
</reference>
<protein>
    <recommendedName>
        <fullName evidence="1">Peptidyl-tRNA hydrolase</fullName>
        <shortName evidence="1">Pth</shortName>
        <ecNumber evidence="1">3.1.1.29</ecNumber>
    </recommendedName>
</protein>
<comment type="function">
    <text evidence="1">Hydrolyzes ribosome-free peptidyl-tRNAs (with 1 or more amino acids incorporated), which drop off the ribosome during protein synthesis, or as a result of ribosome stalling.</text>
</comment>
<comment type="function">
    <text evidence="1">Catalyzes the release of premature peptidyl moieties from peptidyl-tRNA molecules trapped in stalled 50S ribosomal subunits, and thus maintains levels of free tRNAs and 50S ribosomes.</text>
</comment>
<comment type="catalytic activity">
    <reaction evidence="1">
        <text>an N-acyl-L-alpha-aminoacyl-tRNA + H2O = an N-acyl-L-amino acid + a tRNA + H(+)</text>
        <dbReference type="Rhea" id="RHEA:54448"/>
        <dbReference type="Rhea" id="RHEA-COMP:10123"/>
        <dbReference type="Rhea" id="RHEA-COMP:13883"/>
        <dbReference type="ChEBI" id="CHEBI:15377"/>
        <dbReference type="ChEBI" id="CHEBI:15378"/>
        <dbReference type="ChEBI" id="CHEBI:59874"/>
        <dbReference type="ChEBI" id="CHEBI:78442"/>
        <dbReference type="ChEBI" id="CHEBI:138191"/>
        <dbReference type="EC" id="3.1.1.29"/>
    </reaction>
</comment>
<comment type="subunit">
    <text evidence="1">Monomer.</text>
</comment>
<comment type="subcellular location">
    <subcellularLocation>
        <location evidence="1">Cytoplasm</location>
    </subcellularLocation>
</comment>
<comment type="similarity">
    <text evidence="1">Belongs to the PTH family.</text>
</comment>
<gene>
    <name evidence="1" type="primary">pth</name>
    <name type="ordered locus">Rpic_0248</name>
</gene>
<keyword id="KW-0963">Cytoplasm</keyword>
<keyword id="KW-0378">Hydrolase</keyword>
<keyword id="KW-0694">RNA-binding</keyword>
<keyword id="KW-0820">tRNA-binding</keyword>
<organism>
    <name type="scientific">Ralstonia pickettii (strain 12J)</name>
    <dbReference type="NCBI Taxonomy" id="402626"/>
    <lineage>
        <taxon>Bacteria</taxon>
        <taxon>Pseudomonadati</taxon>
        <taxon>Pseudomonadota</taxon>
        <taxon>Betaproteobacteria</taxon>
        <taxon>Burkholderiales</taxon>
        <taxon>Burkholderiaceae</taxon>
        <taxon>Ralstonia</taxon>
    </lineage>
</organism>